<organism>
    <name type="scientific">Thermomicrobium roseum (strain ATCC 27502 / DSM 5159 / P-2)</name>
    <dbReference type="NCBI Taxonomy" id="309801"/>
    <lineage>
        <taxon>Bacteria</taxon>
        <taxon>Pseudomonadati</taxon>
        <taxon>Thermomicrobiota</taxon>
        <taxon>Thermomicrobia</taxon>
        <taxon>Thermomicrobiales</taxon>
        <taxon>Thermomicrobiaceae</taxon>
        <taxon>Thermomicrobium</taxon>
    </lineage>
</organism>
<keyword id="KW-0028">Amino-acid biosynthesis</keyword>
<keyword id="KW-0055">Arginine biosynthesis</keyword>
<keyword id="KW-0067">ATP-binding</keyword>
<keyword id="KW-0436">Ligase</keyword>
<keyword id="KW-0460">Magnesium</keyword>
<keyword id="KW-0464">Manganese</keyword>
<keyword id="KW-0479">Metal-binding</keyword>
<keyword id="KW-0547">Nucleotide-binding</keyword>
<keyword id="KW-0665">Pyrimidine biosynthesis</keyword>
<keyword id="KW-1185">Reference proteome</keyword>
<keyword id="KW-0677">Repeat</keyword>
<gene>
    <name evidence="1" type="primary">carB</name>
    <name type="ordered locus">trd_0212</name>
</gene>
<name>CARB_THERP</name>
<reference key="1">
    <citation type="journal article" date="2009" name="PLoS ONE">
        <title>Complete genome sequence of the aerobic CO-oxidizing thermophile Thermomicrobium roseum.</title>
        <authorList>
            <person name="Wu D."/>
            <person name="Raymond J."/>
            <person name="Wu M."/>
            <person name="Chatterji S."/>
            <person name="Ren Q."/>
            <person name="Graham J.E."/>
            <person name="Bryant D.A."/>
            <person name="Robb F."/>
            <person name="Colman A."/>
            <person name="Tallon L.J."/>
            <person name="Badger J.H."/>
            <person name="Madupu R."/>
            <person name="Ward N.L."/>
            <person name="Eisen J.A."/>
        </authorList>
    </citation>
    <scope>NUCLEOTIDE SEQUENCE [LARGE SCALE GENOMIC DNA]</scope>
    <source>
        <strain>ATCC 27502 / DSM 5159 / P-2</strain>
    </source>
</reference>
<dbReference type="EC" id="6.3.4.16" evidence="1"/>
<dbReference type="EC" id="6.3.5.5" evidence="1"/>
<dbReference type="EMBL" id="CP001275">
    <property type="protein sequence ID" value="ACM05903.1"/>
    <property type="molecule type" value="Genomic_DNA"/>
</dbReference>
<dbReference type="RefSeq" id="WP_012641625.1">
    <property type="nucleotide sequence ID" value="NC_011959.1"/>
</dbReference>
<dbReference type="SMR" id="B9KXM5"/>
<dbReference type="STRING" id="309801.trd_0212"/>
<dbReference type="KEGG" id="tro:trd_0212"/>
<dbReference type="eggNOG" id="COG0458">
    <property type="taxonomic scope" value="Bacteria"/>
</dbReference>
<dbReference type="HOGENOM" id="CLU_000513_1_0_0"/>
<dbReference type="OrthoDB" id="9804197at2"/>
<dbReference type="UniPathway" id="UPA00068">
    <property type="reaction ID" value="UER00171"/>
</dbReference>
<dbReference type="UniPathway" id="UPA00070">
    <property type="reaction ID" value="UER00115"/>
</dbReference>
<dbReference type="Proteomes" id="UP000000447">
    <property type="component" value="Chromosome"/>
</dbReference>
<dbReference type="GO" id="GO:0005737">
    <property type="term" value="C:cytoplasm"/>
    <property type="evidence" value="ECO:0007669"/>
    <property type="project" value="TreeGrafter"/>
</dbReference>
<dbReference type="GO" id="GO:0005524">
    <property type="term" value="F:ATP binding"/>
    <property type="evidence" value="ECO:0007669"/>
    <property type="project" value="UniProtKB-UniRule"/>
</dbReference>
<dbReference type="GO" id="GO:0004087">
    <property type="term" value="F:carbamoyl-phosphate synthase (ammonia) activity"/>
    <property type="evidence" value="ECO:0007669"/>
    <property type="project" value="RHEA"/>
</dbReference>
<dbReference type="GO" id="GO:0004088">
    <property type="term" value="F:carbamoyl-phosphate synthase (glutamine-hydrolyzing) activity"/>
    <property type="evidence" value="ECO:0007669"/>
    <property type="project" value="UniProtKB-UniRule"/>
</dbReference>
<dbReference type="GO" id="GO:0046872">
    <property type="term" value="F:metal ion binding"/>
    <property type="evidence" value="ECO:0007669"/>
    <property type="project" value="UniProtKB-KW"/>
</dbReference>
<dbReference type="GO" id="GO:0044205">
    <property type="term" value="P:'de novo' UMP biosynthetic process"/>
    <property type="evidence" value="ECO:0007669"/>
    <property type="project" value="UniProtKB-UniRule"/>
</dbReference>
<dbReference type="GO" id="GO:0006541">
    <property type="term" value="P:glutamine metabolic process"/>
    <property type="evidence" value="ECO:0007669"/>
    <property type="project" value="TreeGrafter"/>
</dbReference>
<dbReference type="GO" id="GO:0006526">
    <property type="term" value="P:L-arginine biosynthetic process"/>
    <property type="evidence" value="ECO:0007669"/>
    <property type="project" value="UniProtKB-UniRule"/>
</dbReference>
<dbReference type="CDD" id="cd01424">
    <property type="entry name" value="MGS_CPS_II"/>
    <property type="match status" value="1"/>
</dbReference>
<dbReference type="FunFam" id="1.10.1030.10:FF:000002">
    <property type="entry name" value="Carbamoyl-phosphate synthase large chain"/>
    <property type="match status" value="1"/>
</dbReference>
<dbReference type="FunFam" id="3.30.1490.20:FF:000001">
    <property type="entry name" value="Carbamoyl-phosphate synthase large chain"/>
    <property type="match status" value="1"/>
</dbReference>
<dbReference type="FunFam" id="3.30.470.20:FF:000001">
    <property type="entry name" value="Carbamoyl-phosphate synthase large chain"/>
    <property type="match status" value="1"/>
</dbReference>
<dbReference type="FunFam" id="3.30.470.20:FF:000026">
    <property type="entry name" value="Carbamoyl-phosphate synthase large chain"/>
    <property type="match status" value="1"/>
</dbReference>
<dbReference type="FunFam" id="3.40.50.20:FF:000001">
    <property type="entry name" value="Carbamoyl-phosphate synthase large chain"/>
    <property type="match status" value="2"/>
</dbReference>
<dbReference type="Gene3D" id="3.40.50.20">
    <property type="match status" value="2"/>
</dbReference>
<dbReference type="Gene3D" id="3.30.470.20">
    <property type="entry name" value="ATP-grasp fold, B domain"/>
    <property type="match status" value="2"/>
</dbReference>
<dbReference type="Gene3D" id="1.10.1030.10">
    <property type="entry name" value="Carbamoyl-phosphate synthetase, large subunit oligomerisation domain"/>
    <property type="match status" value="1"/>
</dbReference>
<dbReference type="Gene3D" id="3.40.50.1380">
    <property type="entry name" value="Methylglyoxal synthase-like domain"/>
    <property type="match status" value="1"/>
</dbReference>
<dbReference type="HAMAP" id="MF_01210_A">
    <property type="entry name" value="CPSase_L_chain_A"/>
    <property type="match status" value="1"/>
</dbReference>
<dbReference type="HAMAP" id="MF_01210_B">
    <property type="entry name" value="CPSase_L_chain_B"/>
    <property type="match status" value="1"/>
</dbReference>
<dbReference type="InterPro" id="IPR011761">
    <property type="entry name" value="ATP-grasp"/>
</dbReference>
<dbReference type="InterPro" id="IPR006275">
    <property type="entry name" value="CarbamoylP_synth_lsu"/>
</dbReference>
<dbReference type="InterPro" id="IPR005480">
    <property type="entry name" value="CarbamoylP_synth_lsu_oligo"/>
</dbReference>
<dbReference type="InterPro" id="IPR036897">
    <property type="entry name" value="CarbamoylP_synth_lsu_oligo_sf"/>
</dbReference>
<dbReference type="InterPro" id="IPR005479">
    <property type="entry name" value="CbamoylP_synth_lsu-like_ATP-bd"/>
</dbReference>
<dbReference type="InterPro" id="IPR005483">
    <property type="entry name" value="CbamoylP_synth_lsu_CPSase_dom"/>
</dbReference>
<dbReference type="InterPro" id="IPR011607">
    <property type="entry name" value="MGS-like_dom"/>
</dbReference>
<dbReference type="InterPro" id="IPR036914">
    <property type="entry name" value="MGS-like_dom_sf"/>
</dbReference>
<dbReference type="InterPro" id="IPR033937">
    <property type="entry name" value="MGS_CPS_CarB"/>
</dbReference>
<dbReference type="InterPro" id="IPR016185">
    <property type="entry name" value="PreATP-grasp_dom_sf"/>
</dbReference>
<dbReference type="NCBIfam" id="TIGR01369">
    <property type="entry name" value="CPSaseII_lrg"/>
    <property type="match status" value="1"/>
</dbReference>
<dbReference type="NCBIfam" id="NF003671">
    <property type="entry name" value="PRK05294.1"/>
    <property type="match status" value="1"/>
</dbReference>
<dbReference type="NCBIfam" id="NF009455">
    <property type="entry name" value="PRK12815.1"/>
    <property type="match status" value="1"/>
</dbReference>
<dbReference type="PANTHER" id="PTHR11405:SF53">
    <property type="entry name" value="CARBAMOYL-PHOSPHATE SYNTHASE [AMMONIA], MITOCHONDRIAL"/>
    <property type="match status" value="1"/>
</dbReference>
<dbReference type="PANTHER" id="PTHR11405">
    <property type="entry name" value="CARBAMOYLTRANSFERASE FAMILY MEMBER"/>
    <property type="match status" value="1"/>
</dbReference>
<dbReference type="Pfam" id="PF02786">
    <property type="entry name" value="CPSase_L_D2"/>
    <property type="match status" value="2"/>
</dbReference>
<dbReference type="Pfam" id="PF02787">
    <property type="entry name" value="CPSase_L_D3"/>
    <property type="match status" value="1"/>
</dbReference>
<dbReference type="Pfam" id="PF02142">
    <property type="entry name" value="MGS"/>
    <property type="match status" value="1"/>
</dbReference>
<dbReference type="PRINTS" id="PR00098">
    <property type="entry name" value="CPSASE"/>
</dbReference>
<dbReference type="SMART" id="SM01096">
    <property type="entry name" value="CPSase_L_D3"/>
    <property type="match status" value="1"/>
</dbReference>
<dbReference type="SMART" id="SM01209">
    <property type="entry name" value="GARS_A"/>
    <property type="match status" value="1"/>
</dbReference>
<dbReference type="SMART" id="SM00851">
    <property type="entry name" value="MGS"/>
    <property type="match status" value="1"/>
</dbReference>
<dbReference type="SUPFAM" id="SSF48108">
    <property type="entry name" value="Carbamoyl phosphate synthetase, large subunit connection domain"/>
    <property type="match status" value="1"/>
</dbReference>
<dbReference type="SUPFAM" id="SSF56059">
    <property type="entry name" value="Glutathione synthetase ATP-binding domain-like"/>
    <property type="match status" value="2"/>
</dbReference>
<dbReference type="SUPFAM" id="SSF52335">
    <property type="entry name" value="Methylglyoxal synthase-like"/>
    <property type="match status" value="1"/>
</dbReference>
<dbReference type="SUPFAM" id="SSF52440">
    <property type="entry name" value="PreATP-grasp domain"/>
    <property type="match status" value="2"/>
</dbReference>
<dbReference type="PROSITE" id="PS50975">
    <property type="entry name" value="ATP_GRASP"/>
    <property type="match status" value="2"/>
</dbReference>
<dbReference type="PROSITE" id="PS00866">
    <property type="entry name" value="CPSASE_1"/>
    <property type="match status" value="1"/>
</dbReference>
<dbReference type="PROSITE" id="PS00867">
    <property type="entry name" value="CPSASE_2"/>
    <property type="match status" value="2"/>
</dbReference>
<dbReference type="PROSITE" id="PS51855">
    <property type="entry name" value="MGS"/>
    <property type="match status" value="1"/>
</dbReference>
<accession>B9KXM5</accession>
<protein>
    <recommendedName>
        <fullName evidence="1">Carbamoyl phosphate synthase large chain</fullName>
        <ecNumber evidence="1">6.3.4.16</ecNumber>
        <ecNumber evidence="1">6.3.5.5</ecNumber>
    </recommendedName>
    <alternativeName>
        <fullName evidence="1">Carbamoyl phosphate synthetase ammonia chain</fullName>
    </alternativeName>
</protein>
<comment type="function">
    <text evidence="1">Large subunit of the glutamine-dependent carbamoyl phosphate synthetase (CPSase). CPSase catalyzes the formation of carbamoyl phosphate from the ammonia moiety of glutamine, carbonate, and phosphate donated by ATP, constituting the first step of 2 biosynthetic pathways, one leading to arginine and/or urea and the other to pyrimidine nucleotides. The large subunit (synthetase) binds the substrates ammonia (free or transferred from glutamine from the small subunit), hydrogencarbonate and ATP and carries out an ATP-coupled ligase reaction, activating hydrogencarbonate by forming carboxy phosphate which reacts with ammonia to form carbamoyl phosphate.</text>
</comment>
<comment type="catalytic activity">
    <reaction evidence="1">
        <text>hydrogencarbonate + L-glutamine + 2 ATP + H2O = carbamoyl phosphate + L-glutamate + 2 ADP + phosphate + 2 H(+)</text>
        <dbReference type="Rhea" id="RHEA:18633"/>
        <dbReference type="ChEBI" id="CHEBI:15377"/>
        <dbReference type="ChEBI" id="CHEBI:15378"/>
        <dbReference type="ChEBI" id="CHEBI:17544"/>
        <dbReference type="ChEBI" id="CHEBI:29985"/>
        <dbReference type="ChEBI" id="CHEBI:30616"/>
        <dbReference type="ChEBI" id="CHEBI:43474"/>
        <dbReference type="ChEBI" id="CHEBI:58228"/>
        <dbReference type="ChEBI" id="CHEBI:58359"/>
        <dbReference type="ChEBI" id="CHEBI:456216"/>
        <dbReference type="EC" id="6.3.5.5"/>
    </reaction>
</comment>
<comment type="catalytic activity">
    <molecule>Carbamoyl phosphate synthase large chain</molecule>
    <reaction evidence="1">
        <text>hydrogencarbonate + NH4(+) + 2 ATP = carbamoyl phosphate + 2 ADP + phosphate + 2 H(+)</text>
        <dbReference type="Rhea" id="RHEA:18029"/>
        <dbReference type="ChEBI" id="CHEBI:15378"/>
        <dbReference type="ChEBI" id="CHEBI:17544"/>
        <dbReference type="ChEBI" id="CHEBI:28938"/>
        <dbReference type="ChEBI" id="CHEBI:30616"/>
        <dbReference type="ChEBI" id="CHEBI:43474"/>
        <dbReference type="ChEBI" id="CHEBI:58228"/>
        <dbReference type="ChEBI" id="CHEBI:456216"/>
        <dbReference type="EC" id="6.3.4.16"/>
    </reaction>
</comment>
<comment type="cofactor">
    <cofactor evidence="1">
        <name>Mg(2+)</name>
        <dbReference type="ChEBI" id="CHEBI:18420"/>
    </cofactor>
    <cofactor evidence="1">
        <name>Mn(2+)</name>
        <dbReference type="ChEBI" id="CHEBI:29035"/>
    </cofactor>
    <text evidence="1">Binds 4 Mg(2+) or Mn(2+) ions per subunit.</text>
</comment>
<comment type="pathway">
    <text evidence="1">Amino-acid biosynthesis; L-arginine biosynthesis; carbamoyl phosphate from bicarbonate: step 1/1.</text>
</comment>
<comment type="pathway">
    <text evidence="1">Pyrimidine metabolism; UMP biosynthesis via de novo pathway; (S)-dihydroorotate from bicarbonate: step 1/3.</text>
</comment>
<comment type="subunit">
    <text evidence="1">Composed of two chains; the small (or glutamine) chain promotes the hydrolysis of glutamine to ammonia, which is used by the large (or ammonia) chain to synthesize carbamoyl phosphate. Tetramer of heterodimers (alpha,beta)4.</text>
</comment>
<comment type="domain">
    <text evidence="1">The large subunit is composed of 2 ATP-grasp domains that are involved in binding the 2 ATP molecules needed for carbamoyl phosphate synthesis. The N-terminal ATP-grasp domain (referred to as the carboxyphosphate synthetic component) catalyzes the ATP-dependent phosphorylation of hydrogencarbonate to carboxyphosphate and the subsequent nucleophilic attack by ammonia to form a carbamate intermediate. The C-terminal ATP-grasp domain (referred to as the carbamoyl phosphate synthetic component) then catalyzes the phosphorylation of carbamate with the second ATP to form the end product carbamoyl phosphate. The reactive and unstable enzyme intermediates are sequentially channeled from one active site to the next through the interior of the protein over a distance of at least 96 A.</text>
</comment>
<comment type="similarity">
    <text evidence="1">Belongs to the CarB family.</text>
</comment>
<sequence length="1078" mass="116728">MARQPLVSSVLVIGSGPIVIGQAAEFDYSGSQALRALREEGIRTIIVNSNPATIMTDEDMADAVYIEPLTVEVLERIIARERPEGLLATLGGQTGLNLAVALAEAGVLDRYGVRLLGTPLEAIRRAEDRQLFKELLLEIGEPVLESLTAYSVEDALRFAEEVPPPLIVRPAFTLGGTGGGIAFSEDELVTLVQRGIAASPIGQVLVERSLLGWKEIEYEVMRDANDTCITICNIENLDPMGVHTGDSIVVAPSQTLSDRDYQMLRSAALKIIRALGIVGGCNIQFALDPRSDQYYVIEVNPRVSRSSALASKATGYPIARIAAKLAIGRTLDEIPNPVTGKTMASFEPALDYCVVKIPRWPFDKFRHGDRRLGSQMKATGEVMAIDRCFEAALQKAVRGLETDQTDLTWEDSRWQDPSALEQALRIPTDQRLWAVAAALRRGWTPEHVSALSGIDTWFVRAIQRLVEMEQRLASEPLTAELLWEAKRLGFADRTIAALRTTTEQEIRAQRLALGLAPVYKLVDTCAAEFAAETPYFYATYEDENEAPPLDSPKAVVIGAGPIRIGQGIEFDYCSVKAAQALHRAGVAAIMLNNNPETVSTDFDASDRLYVTPLDAESVLDVLRHEASSQYDQLPPVIVQFGGQTAINLAADLAAAGVPILGTDQDAIDLAEDRRRFERFLHELGIPQPPGAGVTTLEEALETAERIGYPVLVRPSYVLGGRAMEVVYRREHLEQYLATSGAFASGRPVLIDKYLDGIELEVDALCDGHEVLVPGIMQHIERAGVHSGDSFAVYPAVELPSVHVDTLVRYTTEIALALAARGLINIQFVLHQGVVYVLEVNPRASRTVPFLSKVTGVPMVDVATQILLGRSLGDQGYRGGLWPRQPLVAVKAPVFSMAKLQGVDVQLGPEMKSTGEAMGIDRTFEAALAKAFLAAGLAIERGAPVLLSLADNDKSAGVELARGLLALGHPLVATEGTARYLRAHGVPVELTVAHIGHGHPDVLEVILERKVRGVINTPGRDEGTIQDGFLIRRAAVERGIPCLTSLDTARALVRALLGGGTSFSVQPLPAYRTREAVLA</sequence>
<feature type="chain" id="PRO_1000164723" description="Carbamoyl phosphate synthase large chain">
    <location>
        <begin position="1"/>
        <end position="1078"/>
    </location>
</feature>
<feature type="domain" description="ATP-grasp 1" evidence="1">
    <location>
        <begin position="133"/>
        <end position="327"/>
    </location>
</feature>
<feature type="domain" description="ATP-grasp 2" evidence="1">
    <location>
        <begin position="677"/>
        <end position="867"/>
    </location>
</feature>
<feature type="domain" description="MGS-like" evidence="1">
    <location>
        <begin position="936"/>
        <end position="1078"/>
    </location>
</feature>
<feature type="region of interest" description="Carboxyphosphate synthetic domain" evidence="1">
    <location>
        <begin position="1"/>
        <end position="401"/>
    </location>
</feature>
<feature type="region of interest" description="Oligomerization domain" evidence="1">
    <location>
        <begin position="402"/>
        <end position="546"/>
    </location>
</feature>
<feature type="region of interest" description="Carbamoyl phosphate synthetic domain" evidence="1">
    <location>
        <begin position="547"/>
        <end position="935"/>
    </location>
</feature>
<feature type="region of interest" description="Allosteric domain" evidence="1">
    <location>
        <begin position="936"/>
        <end position="1078"/>
    </location>
</feature>
<feature type="binding site" evidence="1">
    <location>
        <position position="129"/>
    </location>
    <ligand>
        <name>ATP</name>
        <dbReference type="ChEBI" id="CHEBI:30616"/>
        <label>1</label>
    </ligand>
</feature>
<feature type="binding site" evidence="1">
    <location>
        <position position="169"/>
    </location>
    <ligand>
        <name>ATP</name>
        <dbReference type="ChEBI" id="CHEBI:30616"/>
        <label>1</label>
    </ligand>
</feature>
<feature type="binding site" evidence="1">
    <location>
        <position position="175"/>
    </location>
    <ligand>
        <name>ATP</name>
        <dbReference type="ChEBI" id="CHEBI:30616"/>
        <label>1</label>
    </ligand>
</feature>
<feature type="binding site" evidence="1">
    <location>
        <position position="176"/>
    </location>
    <ligand>
        <name>ATP</name>
        <dbReference type="ChEBI" id="CHEBI:30616"/>
        <label>1</label>
    </ligand>
</feature>
<feature type="binding site" evidence="1">
    <location>
        <position position="208"/>
    </location>
    <ligand>
        <name>ATP</name>
        <dbReference type="ChEBI" id="CHEBI:30616"/>
        <label>1</label>
    </ligand>
</feature>
<feature type="binding site" evidence="1">
    <location>
        <position position="210"/>
    </location>
    <ligand>
        <name>ATP</name>
        <dbReference type="ChEBI" id="CHEBI:30616"/>
        <label>1</label>
    </ligand>
</feature>
<feature type="binding site" evidence="1">
    <location>
        <position position="215"/>
    </location>
    <ligand>
        <name>ATP</name>
        <dbReference type="ChEBI" id="CHEBI:30616"/>
        <label>1</label>
    </ligand>
</feature>
<feature type="binding site" evidence="1">
    <location>
        <position position="241"/>
    </location>
    <ligand>
        <name>ATP</name>
        <dbReference type="ChEBI" id="CHEBI:30616"/>
        <label>1</label>
    </ligand>
</feature>
<feature type="binding site" evidence="1">
    <location>
        <position position="242"/>
    </location>
    <ligand>
        <name>ATP</name>
        <dbReference type="ChEBI" id="CHEBI:30616"/>
        <label>1</label>
    </ligand>
</feature>
<feature type="binding site" evidence="1">
    <location>
        <position position="243"/>
    </location>
    <ligand>
        <name>ATP</name>
        <dbReference type="ChEBI" id="CHEBI:30616"/>
        <label>1</label>
    </ligand>
</feature>
<feature type="binding site" evidence="1">
    <location>
        <position position="284"/>
    </location>
    <ligand>
        <name>ATP</name>
        <dbReference type="ChEBI" id="CHEBI:30616"/>
        <label>1</label>
    </ligand>
</feature>
<feature type="binding site" evidence="1">
    <location>
        <position position="284"/>
    </location>
    <ligand>
        <name>Mg(2+)</name>
        <dbReference type="ChEBI" id="CHEBI:18420"/>
        <label>1</label>
    </ligand>
</feature>
<feature type="binding site" evidence="1">
    <location>
        <position position="284"/>
    </location>
    <ligand>
        <name>Mn(2+)</name>
        <dbReference type="ChEBI" id="CHEBI:29035"/>
        <label>1</label>
    </ligand>
</feature>
<feature type="binding site" evidence="1">
    <location>
        <position position="298"/>
    </location>
    <ligand>
        <name>ATP</name>
        <dbReference type="ChEBI" id="CHEBI:30616"/>
        <label>1</label>
    </ligand>
</feature>
<feature type="binding site" evidence="1">
    <location>
        <position position="298"/>
    </location>
    <ligand>
        <name>Mg(2+)</name>
        <dbReference type="ChEBI" id="CHEBI:18420"/>
        <label>1</label>
    </ligand>
</feature>
<feature type="binding site" evidence="1">
    <location>
        <position position="298"/>
    </location>
    <ligand>
        <name>Mg(2+)</name>
        <dbReference type="ChEBI" id="CHEBI:18420"/>
        <label>2</label>
    </ligand>
</feature>
<feature type="binding site" evidence="1">
    <location>
        <position position="298"/>
    </location>
    <ligand>
        <name>Mn(2+)</name>
        <dbReference type="ChEBI" id="CHEBI:29035"/>
        <label>1</label>
    </ligand>
</feature>
<feature type="binding site" evidence="1">
    <location>
        <position position="298"/>
    </location>
    <ligand>
        <name>Mn(2+)</name>
        <dbReference type="ChEBI" id="CHEBI:29035"/>
        <label>2</label>
    </ligand>
</feature>
<feature type="binding site" evidence="1">
    <location>
        <position position="300"/>
    </location>
    <ligand>
        <name>Mg(2+)</name>
        <dbReference type="ChEBI" id="CHEBI:18420"/>
        <label>2</label>
    </ligand>
</feature>
<feature type="binding site" evidence="1">
    <location>
        <position position="300"/>
    </location>
    <ligand>
        <name>Mn(2+)</name>
        <dbReference type="ChEBI" id="CHEBI:29035"/>
        <label>2</label>
    </ligand>
</feature>
<feature type="binding site" evidence="1">
    <location>
        <position position="713"/>
    </location>
    <ligand>
        <name>ATP</name>
        <dbReference type="ChEBI" id="CHEBI:30616"/>
        <label>2</label>
    </ligand>
</feature>
<feature type="binding site" evidence="1">
    <location>
        <position position="752"/>
    </location>
    <ligand>
        <name>ATP</name>
        <dbReference type="ChEBI" id="CHEBI:30616"/>
        <label>2</label>
    </ligand>
</feature>
<feature type="binding site" evidence="1">
    <location>
        <position position="754"/>
    </location>
    <ligand>
        <name>ATP</name>
        <dbReference type="ChEBI" id="CHEBI:30616"/>
        <label>2</label>
    </ligand>
</feature>
<feature type="binding site" evidence="1">
    <location>
        <position position="758"/>
    </location>
    <ligand>
        <name>ATP</name>
        <dbReference type="ChEBI" id="CHEBI:30616"/>
        <label>2</label>
    </ligand>
</feature>
<feature type="binding site" evidence="1">
    <location>
        <position position="783"/>
    </location>
    <ligand>
        <name>ATP</name>
        <dbReference type="ChEBI" id="CHEBI:30616"/>
        <label>2</label>
    </ligand>
</feature>
<feature type="binding site" evidence="1">
    <location>
        <position position="784"/>
    </location>
    <ligand>
        <name>ATP</name>
        <dbReference type="ChEBI" id="CHEBI:30616"/>
        <label>2</label>
    </ligand>
</feature>
<feature type="binding site" evidence="1">
    <location>
        <position position="785"/>
    </location>
    <ligand>
        <name>ATP</name>
        <dbReference type="ChEBI" id="CHEBI:30616"/>
        <label>2</label>
    </ligand>
</feature>
<feature type="binding site" evidence="1">
    <location>
        <position position="786"/>
    </location>
    <ligand>
        <name>ATP</name>
        <dbReference type="ChEBI" id="CHEBI:30616"/>
        <label>2</label>
    </ligand>
</feature>
<feature type="binding site" evidence="1">
    <location>
        <position position="826"/>
    </location>
    <ligand>
        <name>ATP</name>
        <dbReference type="ChEBI" id="CHEBI:30616"/>
        <label>2</label>
    </ligand>
</feature>
<feature type="binding site" evidence="1">
    <location>
        <position position="826"/>
    </location>
    <ligand>
        <name>Mg(2+)</name>
        <dbReference type="ChEBI" id="CHEBI:18420"/>
        <label>3</label>
    </ligand>
</feature>
<feature type="binding site" evidence="1">
    <location>
        <position position="826"/>
    </location>
    <ligand>
        <name>Mn(2+)</name>
        <dbReference type="ChEBI" id="CHEBI:29035"/>
        <label>3</label>
    </ligand>
</feature>
<feature type="binding site" evidence="1">
    <location>
        <position position="838"/>
    </location>
    <ligand>
        <name>ATP</name>
        <dbReference type="ChEBI" id="CHEBI:30616"/>
        <label>2</label>
    </ligand>
</feature>
<feature type="binding site" evidence="1">
    <location>
        <position position="838"/>
    </location>
    <ligand>
        <name>Mg(2+)</name>
        <dbReference type="ChEBI" id="CHEBI:18420"/>
        <label>3</label>
    </ligand>
</feature>
<feature type="binding site" evidence="1">
    <location>
        <position position="838"/>
    </location>
    <ligand>
        <name>Mg(2+)</name>
        <dbReference type="ChEBI" id="CHEBI:18420"/>
        <label>4</label>
    </ligand>
</feature>
<feature type="binding site" evidence="1">
    <location>
        <position position="838"/>
    </location>
    <ligand>
        <name>Mn(2+)</name>
        <dbReference type="ChEBI" id="CHEBI:29035"/>
        <label>3</label>
    </ligand>
</feature>
<feature type="binding site" evidence="1">
    <location>
        <position position="838"/>
    </location>
    <ligand>
        <name>Mn(2+)</name>
        <dbReference type="ChEBI" id="CHEBI:29035"/>
        <label>4</label>
    </ligand>
</feature>
<feature type="binding site" evidence="1">
    <location>
        <position position="840"/>
    </location>
    <ligand>
        <name>Mg(2+)</name>
        <dbReference type="ChEBI" id="CHEBI:18420"/>
        <label>4</label>
    </ligand>
</feature>
<feature type="binding site" evidence="1">
    <location>
        <position position="840"/>
    </location>
    <ligand>
        <name>Mn(2+)</name>
        <dbReference type="ChEBI" id="CHEBI:29035"/>
        <label>4</label>
    </ligand>
</feature>
<evidence type="ECO:0000255" key="1">
    <source>
        <dbReference type="HAMAP-Rule" id="MF_01210"/>
    </source>
</evidence>
<proteinExistence type="inferred from homology"/>